<organism>
    <name type="scientific">Salmonella newport (strain SL254)</name>
    <dbReference type="NCBI Taxonomy" id="423368"/>
    <lineage>
        <taxon>Bacteria</taxon>
        <taxon>Pseudomonadati</taxon>
        <taxon>Pseudomonadota</taxon>
        <taxon>Gammaproteobacteria</taxon>
        <taxon>Enterobacterales</taxon>
        <taxon>Enterobacteriaceae</taxon>
        <taxon>Salmonella</taxon>
    </lineage>
</organism>
<accession>B4SWC5</accession>
<proteinExistence type="inferred from homology"/>
<gene>
    <name evidence="1" type="primary">cobT</name>
    <name type="ordered locus">SNSL254_A2192</name>
</gene>
<dbReference type="EC" id="2.4.2.21" evidence="1"/>
<dbReference type="EMBL" id="CP001113">
    <property type="protein sequence ID" value="ACF63954.1"/>
    <property type="molecule type" value="Genomic_DNA"/>
</dbReference>
<dbReference type="RefSeq" id="WP_001193983.1">
    <property type="nucleotide sequence ID" value="NZ_CCMR01000002.1"/>
</dbReference>
<dbReference type="SMR" id="B4SWC5"/>
<dbReference type="KEGG" id="see:SNSL254_A2192"/>
<dbReference type="HOGENOM" id="CLU_002982_0_0_6"/>
<dbReference type="UniPathway" id="UPA00061">
    <property type="reaction ID" value="UER00516"/>
</dbReference>
<dbReference type="Proteomes" id="UP000008824">
    <property type="component" value="Chromosome"/>
</dbReference>
<dbReference type="GO" id="GO:0008939">
    <property type="term" value="F:nicotinate-nucleotide-dimethylbenzimidazole phosphoribosyltransferase activity"/>
    <property type="evidence" value="ECO:0007669"/>
    <property type="project" value="UniProtKB-UniRule"/>
</dbReference>
<dbReference type="GO" id="GO:0009236">
    <property type="term" value="P:cobalamin biosynthetic process"/>
    <property type="evidence" value="ECO:0007669"/>
    <property type="project" value="UniProtKB-KW"/>
</dbReference>
<dbReference type="CDD" id="cd02439">
    <property type="entry name" value="DMB-PRT_CobT"/>
    <property type="match status" value="1"/>
</dbReference>
<dbReference type="FunFam" id="1.10.1610.10:FF:000001">
    <property type="entry name" value="Nicotinate-nucleotide--dimethylbenzimidazole phosphoribosyltransferase"/>
    <property type="match status" value="1"/>
</dbReference>
<dbReference type="FunFam" id="3.40.50.10210:FF:000001">
    <property type="entry name" value="Nicotinate-nucleotide--dimethylbenzimidazole phosphoribosyltransferase"/>
    <property type="match status" value="1"/>
</dbReference>
<dbReference type="Gene3D" id="1.10.1610.10">
    <property type="match status" value="1"/>
</dbReference>
<dbReference type="Gene3D" id="3.40.50.10210">
    <property type="match status" value="1"/>
</dbReference>
<dbReference type="HAMAP" id="MF_00230">
    <property type="entry name" value="CobT"/>
    <property type="match status" value="1"/>
</dbReference>
<dbReference type="InterPro" id="IPR003200">
    <property type="entry name" value="Nict_dMeBzImd_PRibTrfase"/>
</dbReference>
<dbReference type="InterPro" id="IPR017846">
    <property type="entry name" value="Nict_dMeBzImd_PRibTrfase_bact"/>
</dbReference>
<dbReference type="InterPro" id="IPR023195">
    <property type="entry name" value="Nict_dMeBzImd_PRibTrfase_N"/>
</dbReference>
<dbReference type="InterPro" id="IPR036087">
    <property type="entry name" value="Nict_dMeBzImd_PRibTrfase_sf"/>
</dbReference>
<dbReference type="NCBIfam" id="TIGR03160">
    <property type="entry name" value="cobT_DBIPRT"/>
    <property type="match status" value="1"/>
</dbReference>
<dbReference type="NCBIfam" id="NF000996">
    <property type="entry name" value="PRK00105.1"/>
    <property type="match status" value="1"/>
</dbReference>
<dbReference type="PANTHER" id="PTHR43463">
    <property type="entry name" value="NICOTINATE-NUCLEOTIDE--DIMETHYLBENZIMIDAZOLE PHOSPHORIBOSYLTRANSFERASE"/>
    <property type="match status" value="1"/>
</dbReference>
<dbReference type="PANTHER" id="PTHR43463:SF1">
    <property type="entry name" value="NICOTINATE-NUCLEOTIDE--DIMETHYLBENZIMIDAZOLE PHOSPHORIBOSYLTRANSFERASE"/>
    <property type="match status" value="1"/>
</dbReference>
<dbReference type="Pfam" id="PF02277">
    <property type="entry name" value="DBI_PRT"/>
    <property type="match status" value="1"/>
</dbReference>
<dbReference type="SUPFAM" id="SSF52733">
    <property type="entry name" value="Nicotinate mononucleotide:5,6-dimethylbenzimidazole phosphoribosyltransferase (CobT)"/>
    <property type="match status" value="1"/>
</dbReference>
<comment type="function">
    <text evidence="1">Catalyzes the synthesis of alpha-ribazole-5'-phosphate from nicotinate mononucleotide (NAMN) and 5,6-dimethylbenzimidazole (DMB).</text>
</comment>
<comment type="catalytic activity">
    <reaction evidence="1">
        <text>5,6-dimethylbenzimidazole + nicotinate beta-D-ribonucleotide = alpha-ribazole 5'-phosphate + nicotinate + H(+)</text>
        <dbReference type="Rhea" id="RHEA:11196"/>
        <dbReference type="ChEBI" id="CHEBI:15378"/>
        <dbReference type="ChEBI" id="CHEBI:15890"/>
        <dbReference type="ChEBI" id="CHEBI:32544"/>
        <dbReference type="ChEBI" id="CHEBI:57502"/>
        <dbReference type="ChEBI" id="CHEBI:57918"/>
        <dbReference type="EC" id="2.4.2.21"/>
    </reaction>
</comment>
<comment type="pathway">
    <text evidence="1">Nucleoside biosynthesis; alpha-ribazole biosynthesis; alpha-ribazole from 5,6-dimethylbenzimidazole: step 1/2.</text>
</comment>
<comment type="subunit">
    <text evidence="1">Homodimer.</text>
</comment>
<comment type="similarity">
    <text evidence="1">Belongs to the CobT family.</text>
</comment>
<feature type="chain" id="PRO_1000100478" description="Nicotinate-nucleotide--dimethylbenzimidazole phosphoribosyltransferase">
    <location>
        <begin position="1"/>
        <end position="356"/>
    </location>
</feature>
<feature type="active site" description="Proton acceptor" evidence="1">
    <location>
        <position position="317"/>
    </location>
</feature>
<keyword id="KW-0169">Cobalamin biosynthesis</keyword>
<keyword id="KW-0328">Glycosyltransferase</keyword>
<keyword id="KW-0808">Transferase</keyword>
<reference key="1">
    <citation type="journal article" date="2011" name="J. Bacteriol.">
        <title>Comparative genomics of 28 Salmonella enterica isolates: evidence for CRISPR-mediated adaptive sublineage evolution.</title>
        <authorList>
            <person name="Fricke W.F."/>
            <person name="Mammel M.K."/>
            <person name="McDermott P.F."/>
            <person name="Tartera C."/>
            <person name="White D.G."/>
            <person name="Leclerc J.E."/>
            <person name="Ravel J."/>
            <person name="Cebula T.A."/>
        </authorList>
    </citation>
    <scope>NUCLEOTIDE SEQUENCE [LARGE SCALE GENOMIC DNA]</scope>
    <source>
        <strain>SL254</strain>
    </source>
</reference>
<evidence type="ECO:0000255" key="1">
    <source>
        <dbReference type="HAMAP-Rule" id="MF_00230"/>
    </source>
</evidence>
<protein>
    <recommendedName>
        <fullName evidence="1">Nicotinate-nucleotide--dimethylbenzimidazole phosphoribosyltransferase</fullName>
        <shortName evidence="1">NN:DBI PRT</shortName>
        <ecNumber evidence="1">2.4.2.21</ecNumber>
    </recommendedName>
    <alternativeName>
        <fullName evidence="1">N(1)-alpha-phosphoribosyltransferase</fullName>
    </alternativeName>
</protein>
<name>COBT_SALNS</name>
<sequence length="356" mass="36613">MQTLHALLRDIPAPDAEAMARAQQHIDGLLKPPGSLGRLETLAVQLAGMPGLNGTPQVGEKAVLVMCADHGVWDEGVAVSPKIVTAIQAANMTRGTTGVCVLAAQAGAKVHVIDVGIDAEPIPGVVNMRVARGCGNIAVGPAMSRLQAEALLLEVSRYTCDLAQRGVTLFGVGELGMANTTPAAAMVSVFTGSDAKEVVGIGANLPPSRIDNKVDVVRRAIAINQPNPRDGIDVLSKVGGFDLVGMTGVMLGAARCGLPVLLDGFLSYSAALAACQIAPAVRPYLIPSHFSAEKGARIALAHLSMEPYLHMAMRLGEGSGAALAMPIVEAACAMFHNMGELAASNIVLPEGNANAT</sequence>